<dbReference type="EC" id="1.1.1.86" evidence="1"/>
<dbReference type="EMBL" id="AE014299">
    <property type="protein sequence ID" value="AAN57317.1"/>
    <property type="molecule type" value="Genomic_DNA"/>
</dbReference>
<dbReference type="RefSeq" id="NP_719873.1">
    <property type="nucleotide sequence ID" value="NC_004347.2"/>
</dbReference>
<dbReference type="RefSeq" id="WP_011074006.1">
    <property type="nucleotide sequence ID" value="NC_004347.2"/>
</dbReference>
<dbReference type="SMR" id="Q8E9D5"/>
<dbReference type="STRING" id="211586.SO_4349"/>
<dbReference type="PaxDb" id="211586-SO_4349"/>
<dbReference type="KEGG" id="son:SO_4349"/>
<dbReference type="PATRIC" id="fig|211586.12.peg.4212"/>
<dbReference type="eggNOG" id="COG0059">
    <property type="taxonomic scope" value="Bacteria"/>
</dbReference>
<dbReference type="HOGENOM" id="CLU_551905_0_0_6"/>
<dbReference type="OrthoDB" id="9804088at2"/>
<dbReference type="PhylomeDB" id="Q8E9D5"/>
<dbReference type="BioCyc" id="SONE211586:G1GMP-4022-MONOMER"/>
<dbReference type="UniPathway" id="UPA00047">
    <property type="reaction ID" value="UER00056"/>
</dbReference>
<dbReference type="UniPathway" id="UPA00049">
    <property type="reaction ID" value="UER00060"/>
</dbReference>
<dbReference type="Proteomes" id="UP000008186">
    <property type="component" value="Chromosome"/>
</dbReference>
<dbReference type="GO" id="GO:0005829">
    <property type="term" value="C:cytosol"/>
    <property type="evidence" value="ECO:0000318"/>
    <property type="project" value="GO_Central"/>
</dbReference>
<dbReference type="GO" id="GO:0004455">
    <property type="term" value="F:ketol-acid reductoisomerase activity"/>
    <property type="evidence" value="ECO:0000318"/>
    <property type="project" value="GO_Central"/>
</dbReference>
<dbReference type="GO" id="GO:0000287">
    <property type="term" value="F:magnesium ion binding"/>
    <property type="evidence" value="ECO:0007669"/>
    <property type="project" value="UniProtKB-UniRule"/>
</dbReference>
<dbReference type="GO" id="GO:0009097">
    <property type="term" value="P:isoleucine biosynthetic process"/>
    <property type="evidence" value="ECO:0000318"/>
    <property type="project" value="GO_Central"/>
</dbReference>
<dbReference type="GO" id="GO:0009099">
    <property type="term" value="P:L-valine biosynthetic process"/>
    <property type="evidence" value="ECO:0000318"/>
    <property type="project" value="GO_Central"/>
</dbReference>
<dbReference type="FunFam" id="3.40.50.720:FF:000043">
    <property type="entry name" value="Ketol-acid reductoisomerase (NADP(+))"/>
    <property type="match status" value="1"/>
</dbReference>
<dbReference type="Gene3D" id="1.10.1040.10">
    <property type="entry name" value="N-(1-d-carboxylethyl)-l-norvaline Dehydrogenase, domain 2"/>
    <property type="match status" value="1"/>
</dbReference>
<dbReference type="Gene3D" id="3.40.50.720">
    <property type="entry name" value="NAD(P)-binding Rossmann-like Domain"/>
    <property type="match status" value="1"/>
</dbReference>
<dbReference type="HAMAP" id="MF_00435">
    <property type="entry name" value="IlvC"/>
    <property type="match status" value="1"/>
</dbReference>
<dbReference type="InterPro" id="IPR008927">
    <property type="entry name" value="6-PGluconate_DH-like_C_sf"/>
</dbReference>
<dbReference type="InterPro" id="IPR013328">
    <property type="entry name" value="6PGD_dom2"/>
</dbReference>
<dbReference type="InterPro" id="IPR013023">
    <property type="entry name" value="KARI"/>
</dbReference>
<dbReference type="InterPro" id="IPR000506">
    <property type="entry name" value="KARI_C"/>
</dbReference>
<dbReference type="InterPro" id="IPR013116">
    <property type="entry name" value="KARI_N"/>
</dbReference>
<dbReference type="InterPro" id="IPR036291">
    <property type="entry name" value="NAD(P)-bd_dom_sf"/>
</dbReference>
<dbReference type="NCBIfam" id="TIGR00465">
    <property type="entry name" value="ilvC"/>
    <property type="match status" value="1"/>
</dbReference>
<dbReference type="NCBIfam" id="NF003557">
    <property type="entry name" value="PRK05225.1"/>
    <property type="match status" value="1"/>
</dbReference>
<dbReference type="PANTHER" id="PTHR21371">
    <property type="entry name" value="KETOL-ACID REDUCTOISOMERASE, MITOCHONDRIAL"/>
    <property type="match status" value="1"/>
</dbReference>
<dbReference type="PANTHER" id="PTHR21371:SF1">
    <property type="entry name" value="KETOL-ACID REDUCTOISOMERASE, MITOCHONDRIAL"/>
    <property type="match status" value="1"/>
</dbReference>
<dbReference type="Pfam" id="PF01450">
    <property type="entry name" value="KARI_C"/>
    <property type="match status" value="2"/>
</dbReference>
<dbReference type="Pfam" id="PF07991">
    <property type="entry name" value="KARI_N"/>
    <property type="match status" value="1"/>
</dbReference>
<dbReference type="SUPFAM" id="SSF48179">
    <property type="entry name" value="6-phosphogluconate dehydrogenase C-terminal domain-like"/>
    <property type="match status" value="2"/>
</dbReference>
<dbReference type="SUPFAM" id="SSF51735">
    <property type="entry name" value="NAD(P)-binding Rossmann-fold domains"/>
    <property type="match status" value="1"/>
</dbReference>
<dbReference type="PROSITE" id="PS51851">
    <property type="entry name" value="KARI_C"/>
    <property type="match status" value="2"/>
</dbReference>
<dbReference type="PROSITE" id="PS51850">
    <property type="entry name" value="KARI_N"/>
    <property type="match status" value="1"/>
</dbReference>
<feature type="chain" id="PRO_0000151353" description="Ketol-acid reductoisomerase (NADP(+))">
    <location>
        <begin position="1"/>
        <end position="492"/>
    </location>
</feature>
<feature type="domain" description="KARI N-terminal Rossmann" evidence="2">
    <location>
        <begin position="15"/>
        <end position="208"/>
    </location>
</feature>
<feature type="domain" description="KARI C-terminal knotted 1" evidence="3">
    <location>
        <begin position="209"/>
        <end position="353"/>
    </location>
</feature>
<feature type="domain" description="KARI C-terminal knotted 2" evidence="3">
    <location>
        <begin position="354"/>
        <end position="486"/>
    </location>
</feature>
<feature type="active site" evidence="1">
    <location>
        <position position="132"/>
    </location>
</feature>
<feature type="binding site" evidence="1">
    <location>
        <begin position="45"/>
        <end position="48"/>
    </location>
    <ligand>
        <name>NADP(+)</name>
        <dbReference type="ChEBI" id="CHEBI:58349"/>
    </ligand>
</feature>
<feature type="binding site" evidence="1">
    <location>
        <position position="68"/>
    </location>
    <ligand>
        <name>NADP(+)</name>
        <dbReference type="ChEBI" id="CHEBI:58349"/>
    </ligand>
</feature>
<feature type="binding site" evidence="1">
    <location>
        <position position="76"/>
    </location>
    <ligand>
        <name>NADP(+)</name>
        <dbReference type="ChEBI" id="CHEBI:58349"/>
    </ligand>
</feature>
<feature type="binding site" evidence="1">
    <location>
        <position position="78"/>
    </location>
    <ligand>
        <name>NADP(+)</name>
        <dbReference type="ChEBI" id="CHEBI:58349"/>
    </ligand>
</feature>
<feature type="binding site" evidence="1">
    <location>
        <begin position="108"/>
        <end position="110"/>
    </location>
    <ligand>
        <name>NADP(+)</name>
        <dbReference type="ChEBI" id="CHEBI:58349"/>
    </ligand>
</feature>
<feature type="binding site" evidence="1">
    <location>
        <position position="158"/>
    </location>
    <ligand>
        <name>NADP(+)</name>
        <dbReference type="ChEBI" id="CHEBI:58349"/>
    </ligand>
</feature>
<feature type="binding site" evidence="1">
    <location>
        <position position="217"/>
    </location>
    <ligand>
        <name>Mg(2+)</name>
        <dbReference type="ChEBI" id="CHEBI:18420"/>
        <label>1</label>
    </ligand>
</feature>
<feature type="binding site" evidence="1">
    <location>
        <position position="217"/>
    </location>
    <ligand>
        <name>Mg(2+)</name>
        <dbReference type="ChEBI" id="CHEBI:18420"/>
        <label>2</label>
    </ligand>
</feature>
<feature type="binding site" evidence="1">
    <location>
        <position position="221"/>
    </location>
    <ligand>
        <name>Mg(2+)</name>
        <dbReference type="ChEBI" id="CHEBI:18420"/>
        <label>1</label>
    </ligand>
</feature>
<feature type="binding site" evidence="1">
    <location>
        <position position="389"/>
    </location>
    <ligand>
        <name>Mg(2+)</name>
        <dbReference type="ChEBI" id="CHEBI:18420"/>
        <label>2</label>
    </ligand>
</feature>
<feature type="binding site" evidence="1">
    <location>
        <position position="393"/>
    </location>
    <ligand>
        <name>Mg(2+)</name>
        <dbReference type="ChEBI" id="CHEBI:18420"/>
        <label>2</label>
    </ligand>
</feature>
<feature type="binding site" evidence="1">
    <location>
        <position position="414"/>
    </location>
    <ligand>
        <name>substrate</name>
    </ligand>
</feature>
<comment type="function">
    <text evidence="1">Involved in the biosynthesis of branched-chain amino acids (BCAA). Catalyzes an alkyl-migration followed by a ketol-acid reduction of (S)-2-acetolactate (S2AL) to yield (R)-2,3-dihydroxy-isovalerate. In the isomerase reaction, S2AL is rearranged via a Mg-dependent methyl migration to produce 3-hydroxy-3-methyl-2-ketobutyrate (HMKB). In the reductase reaction, this 2-ketoacid undergoes a metal-dependent reduction by NADPH to yield (R)-2,3-dihydroxy-isovalerate.</text>
</comment>
<comment type="catalytic activity">
    <reaction evidence="1">
        <text>(2R)-2,3-dihydroxy-3-methylbutanoate + NADP(+) = (2S)-2-acetolactate + NADPH + H(+)</text>
        <dbReference type="Rhea" id="RHEA:22068"/>
        <dbReference type="ChEBI" id="CHEBI:15378"/>
        <dbReference type="ChEBI" id="CHEBI:49072"/>
        <dbReference type="ChEBI" id="CHEBI:57783"/>
        <dbReference type="ChEBI" id="CHEBI:58349"/>
        <dbReference type="ChEBI" id="CHEBI:58476"/>
        <dbReference type="EC" id="1.1.1.86"/>
    </reaction>
</comment>
<comment type="catalytic activity">
    <reaction evidence="1">
        <text>(2R,3R)-2,3-dihydroxy-3-methylpentanoate + NADP(+) = (S)-2-ethyl-2-hydroxy-3-oxobutanoate + NADPH + H(+)</text>
        <dbReference type="Rhea" id="RHEA:13493"/>
        <dbReference type="ChEBI" id="CHEBI:15378"/>
        <dbReference type="ChEBI" id="CHEBI:49256"/>
        <dbReference type="ChEBI" id="CHEBI:49258"/>
        <dbReference type="ChEBI" id="CHEBI:57783"/>
        <dbReference type="ChEBI" id="CHEBI:58349"/>
        <dbReference type="EC" id="1.1.1.86"/>
    </reaction>
</comment>
<comment type="cofactor">
    <cofactor evidence="1">
        <name>Mg(2+)</name>
        <dbReference type="ChEBI" id="CHEBI:18420"/>
    </cofactor>
    <text evidence="1">Binds 2 magnesium ions per subunit.</text>
</comment>
<comment type="pathway">
    <text evidence="1">Amino-acid biosynthesis; L-isoleucine biosynthesis; L-isoleucine from 2-oxobutanoate: step 2/4.</text>
</comment>
<comment type="pathway">
    <text evidence="1">Amino-acid biosynthesis; L-valine biosynthesis; L-valine from pyruvate: step 2/4.</text>
</comment>
<comment type="similarity">
    <text evidence="1">Belongs to the ketol-acid reductoisomerase family.</text>
</comment>
<gene>
    <name evidence="1" type="primary">ilvC</name>
    <name type="ordered locus">SO_4349</name>
</gene>
<sequence length="492" mass="54063">MANYFNSLNLRQQLAQLGQCRFMDRSEFSDGCNYIKDWNIVILGCGAQGLNQGLNMRDSGLNIAYALRPEAIAQKRASWQKATDNGFKVGTFEELIPSADLVLNLTPDKQHSNVVSAVMPLMKQGATLSYSHGFNIVEEGMQIRPDITVIMVAPKCPGTEVREEYKRGFGVPTLIAVHPENDPNGDGLDIAKAYASATGGDRAGVLQSSFIAEVKSDLMGEQTILCGMLQTGAILGYEKMVADGVEPGYAAKLIQQGWETVTEALKHGGITNMMDRLSNPAKIKAFEIAEDLKDILQPLFEKHMDDIISGEFSRTMMQDWANDDANLLRWRAETGETGFENAPVSSEHIDEQTYFDKGIFLVAMIKAGVELAFDTMVSAGIVEESAYYESLHETPLIANTIARKRLYEMNVVISDTAEYGCYLFNHAAVPLLRDYVNAMSPEYLGAGLKDSSNSVDNLQLIAINDAIRHTAVEYVGAELRGYMTDMKSIVGA</sequence>
<proteinExistence type="inferred from homology"/>
<accession>Q8E9D5</accession>
<reference key="1">
    <citation type="journal article" date="2002" name="Nat. Biotechnol.">
        <title>Genome sequence of the dissimilatory metal ion-reducing bacterium Shewanella oneidensis.</title>
        <authorList>
            <person name="Heidelberg J.F."/>
            <person name="Paulsen I.T."/>
            <person name="Nelson K.E."/>
            <person name="Gaidos E.J."/>
            <person name="Nelson W.C."/>
            <person name="Read T.D."/>
            <person name="Eisen J.A."/>
            <person name="Seshadri R."/>
            <person name="Ward N.L."/>
            <person name="Methe B.A."/>
            <person name="Clayton R.A."/>
            <person name="Meyer T."/>
            <person name="Tsapin A."/>
            <person name="Scott J."/>
            <person name="Beanan M.J."/>
            <person name="Brinkac L.M."/>
            <person name="Daugherty S.C."/>
            <person name="DeBoy R.T."/>
            <person name="Dodson R.J."/>
            <person name="Durkin A.S."/>
            <person name="Haft D.H."/>
            <person name="Kolonay J.F."/>
            <person name="Madupu R."/>
            <person name="Peterson J.D."/>
            <person name="Umayam L.A."/>
            <person name="White O."/>
            <person name="Wolf A.M."/>
            <person name="Vamathevan J.J."/>
            <person name="Weidman J.F."/>
            <person name="Impraim M."/>
            <person name="Lee K."/>
            <person name="Berry K.J."/>
            <person name="Lee C."/>
            <person name="Mueller J."/>
            <person name="Khouri H.M."/>
            <person name="Gill J."/>
            <person name="Utterback T.R."/>
            <person name="McDonald L.A."/>
            <person name="Feldblyum T.V."/>
            <person name="Smith H.O."/>
            <person name="Venter J.C."/>
            <person name="Nealson K.H."/>
            <person name="Fraser C.M."/>
        </authorList>
    </citation>
    <scope>NUCLEOTIDE SEQUENCE [LARGE SCALE GENOMIC DNA]</scope>
    <source>
        <strain>ATCC 700550 / JCM 31522 / CIP 106686 / LMG 19005 / NCIMB 14063 / MR-1</strain>
    </source>
</reference>
<evidence type="ECO:0000255" key="1">
    <source>
        <dbReference type="HAMAP-Rule" id="MF_00435"/>
    </source>
</evidence>
<evidence type="ECO:0000255" key="2">
    <source>
        <dbReference type="PROSITE-ProRule" id="PRU01197"/>
    </source>
</evidence>
<evidence type="ECO:0000255" key="3">
    <source>
        <dbReference type="PROSITE-ProRule" id="PRU01198"/>
    </source>
</evidence>
<name>ILVC_SHEON</name>
<keyword id="KW-0028">Amino-acid biosynthesis</keyword>
<keyword id="KW-0100">Branched-chain amino acid biosynthesis</keyword>
<keyword id="KW-0460">Magnesium</keyword>
<keyword id="KW-0479">Metal-binding</keyword>
<keyword id="KW-0521">NADP</keyword>
<keyword id="KW-0560">Oxidoreductase</keyword>
<keyword id="KW-1185">Reference proteome</keyword>
<keyword id="KW-0677">Repeat</keyword>
<protein>
    <recommendedName>
        <fullName evidence="1">Ketol-acid reductoisomerase (NADP(+))</fullName>
        <shortName evidence="1">KARI</shortName>
        <ecNumber evidence="1">1.1.1.86</ecNumber>
    </recommendedName>
    <alternativeName>
        <fullName evidence="1">Acetohydroxy-acid isomeroreductase</fullName>
        <shortName evidence="1">AHIR</shortName>
    </alternativeName>
    <alternativeName>
        <fullName evidence="1">Alpha-keto-beta-hydroxylacyl reductoisomerase</fullName>
    </alternativeName>
    <alternativeName>
        <fullName evidence="1">Ketol-acid reductoisomerase type 2</fullName>
    </alternativeName>
    <alternativeName>
        <fullName evidence="1">Ketol-acid reductoisomerase type II</fullName>
    </alternativeName>
</protein>
<organism>
    <name type="scientific">Shewanella oneidensis (strain ATCC 700550 / JCM 31522 / CIP 106686 / LMG 19005 / NCIMB 14063 / MR-1)</name>
    <dbReference type="NCBI Taxonomy" id="211586"/>
    <lineage>
        <taxon>Bacteria</taxon>
        <taxon>Pseudomonadati</taxon>
        <taxon>Pseudomonadota</taxon>
        <taxon>Gammaproteobacteria</taxon>
        <taxon>Alteromonadales</taxon>
        <taxon>Shewanellaceae</taxon>
        <taxon>Shewanella</taxon>
    </lineage>
</organism>